<dbReference type="EMBL" id="AP006618">
    <property type="protein sequence ID" value="BAD60525.1"/>
    <property type="molecule type" value="Genomic_DNA"/>
</dbReference>
<dbReference type="RefSeq" id="WP_011212207.1">
    <property type="nucleotide sequence ID" value="NC_006361.1"/>
</dbReference>
<dbReference type="SMR" id="Q5YMR6"/>
<dbReference type="STRING" id="247156.NFA_56730"/>
<dbReference type="GeneID" id="61136609"/>
<dbReference type="KEGG" id="nfa:NFA_56730"/>
<dbReference type="eggNOG" id="COG0230">
    <property type="taxonomic scope" value="Bacteria"/>
</dbReference>
<dbReference type="HOGENOM" id="CLU_129938_2_1_11"/>
<dbReference type="OrthoDB" id="9804832at2"/>
<dbReference type="Proteomes" id="UP000006820">
    <property type="component" value="Chromosome"/>
</dbReference>
<dbReference type="GO" id="GO:1990904">
    <property type="term" value="C:ribonucleoprotein complex"/>
    <property type="evidence" value="ECO:0007669"/>
    <property type="project" value="UniProtKB-KW"/>
</dbReference>
<dbReference type="GO" id="GO:0005840">
    <property type="term" value="C:ribosome"/>
    <property type="evidence" value="ECO:0007669"/>
    <property type="project" value="UniProtKB-KW"/>
</dbReference>
<dbReference type="GO" id="GO:0003735">
    <property type="term" value="F:structural constituent of ribosome"/>
    <property type="evidence" value="ECO:0007669"/>
    <property type="project" value="InterPro"/>
</dbReference>
<dbReference type="GO" id="GO:0006412">
    <property type="term" value="P:translation"/>
    <property type="evidence" value="ECO:0007669"/>
    <property type="project" value="UniProtKB-UniRule"/>
</dbReference>
<dbReference type="FunFam" id="1.10.287.3980:FF:000001">
    <property type="entry name" value="Mitochondrial ribosomal protein L34"/>
    <property type="match status" value="1"/>
</dbReference>
<dbReference type="Gene3D" id="1.10.287.3980">
    <property type="match status" value="1"/>
</dbReference>
<dbReference type="HAMAP" id="MF_00391">
    <property type="entry name" value="Ribosomal_bL34"/>
    <property type="match status" value="1"/>
</dbReference>
<dbReference type="InterPro" id="IPR000271">
    <property type="entry name" value="Ribosomal_bL34"/>
</dbReference>
<dbReference type="InterPro" id="IPR020939">
    <property type="entry name" value="Ribosomal_bL34_CS"/>
</dbReference>
<dbReference type="NCBIfam" id="TIGR01030">
    <property type="entry name" value="rpmH_bact"/>
    <property type="match status" value="1"/>
</dbReference>
<dbReference type="PANTHER" id="PTHR14503:SF4">
    <property type="entry name" value="LARGE RIBOSOMAL SUBUNIT PROTEIN BL34M"/>
    <property type="match status" value="1"/>
</dbReference>
<dbReference type="PANTHER" id="PTHR14503">
    <property type="entry name" value="MITOCHONDRIAL RIBOSOMAL PROTEIN 34 FAMILY MEMBER"/>
    <property type="match status" value="1"/>
</dbReference>
<dbReference type="Pfam" id="PF00468">
    <property type="entry name" value="Ribosomal_L34"/>
    <property type="match status" value="1"/>
</dbReference>
<dbReference type="PROSITE" id="PS00784">
    <property type="entry name" value="RIBOSOMAL_L34"/>
    <property type="match status" value="1"/>
</dbReference>
<proteinExistence type="inferred from homology"/>
<reference key="1">
    <citation type="journal article" date="2004" name="Proc. Natl. Acad. Sci. U.S.A.">
        <title>The complete genomic sequence of Nocardia farcinica IFM 10152.</title>
        <authorList>
            <person name="Ishikawa J."/>
            <person name="Yamashita A."/>
            <person name="Mikami Y."/>
            <person name="Hoshino Y."/>
            <person name="Kurita H."/>
            <person name="Hotta K."/>
            <person name="Shiba T."/>
            <person name="Hattori M."/>
        </authorList>
    </citation>
    <scope>NUCLEOTIDE SEQUENCE [LARGE SCALE GENOMIC DNA]</scope>
    <source>
        <strain>IFM 10152</strain>
    </source>
</reference>
<sequence length="47" mass="5491">MAKGKRTFQPNNRRRARVHGFRLRMRTRAGRAIVSARRRKGRATLTA</sequence>
<comment type="similarity">
    <text evidence="1">Belongs to the bacterial ribosomal protein bL34 family.</text>
</comment>
<name>RL34_NOCFA</name>
<keyword id="KW-1185">Reference proteome</keyword>
<keyword id="KW-0687">Ribonucleoprotein</keyword>
<keyword id="KW-0689">Ribosomal protein</keyword>
<gene>
    <name evidence="1" type="primary">rpmH</name>
    <name type="ordered locus">NFA_56730</name>
</gene>
<protein>
    <recommendedName>
        <fullName evidence="1">Large ribosomal subunit protein bL34</fullName>
    </recommendedName>
    <alternativeName>
        <fullName evidence="2">50S ribosomal protein L34</fullName>
    </alternativeName>
</protein>
<evidence type="ECO:0000255" key="1">
    <source>
        <dbReference type="HAMAP-Rule" id="MF_00391"/>
    </source>
</evidence>
<evidence type="ECO:0000305" key="2"/>
<feature type="chain" id="PRO_0000187429" description="Large ribosomal subunit protein bL34">
    <location>
        <begin position="1"/>
        <end position="47"/>
    </location>
</feature>
<organism>
    <name type="scientific">Nocardia farcinica (strain IFM 10152)</name>
    <dbReference type="NCBI Taxonomy" id="247156"/>
    <lineage>
        <taxon>Bacteria</taxon>
        <taxon>Bacillati</taxon>
        <taxon>Actinomycetota</taxon>
        <taxon>Actinomycetes</taxon>
        <taxon>Mycobacteriales</taxon>
        <taxon>Nocardiaceae</taxon>
        <taxon>Nocardia</taxon>
    </lineage>
</organism>
<accession>Q5YMR6</accession>